<keyword id="KW-1185">Reference proteome</keyword>
<keyword id="KW-0687">Ribonucleoprotein</keyword>
<keyword id="KW-0689">Ribosomal protein</keyword>
<keyword id="KW-0694">RNA-binding</keyword>
<keyword id="KW-0699">rRNA-binding</keyword>
<dbReference type="EMBL" id="CU468135">
    <property type="protein sequence ID" value="CAO95377.1"/>
    <property type="molecule type" value="Genomic_DNA"/>
</dbReference>
<dbReference type="RefSeq" id="WP_004155106.1">
    <property type="nucleotide sequence ID" value="NC_010694.1"/>
</dbReference>
<dbReference type="SMR" id="B2VGS9"/>
<dbReference type="STRING" id="465817.ETA_03310"/>
<dbReference type="GeneID" id="97604678"/>
<dbReference type="KEGG" id="eta:ETA_03310"/>
<dbReference type="eggNOG" id="COG0261">
    <property type="taxonomic scope" value="Bacteria"/>
</dbReference>
<dbReference type="HOGENOM" id="CLU_061463_3_3_6"/>
<dbReference type="OrthoDB" id="9813334at2"/>
<dbReference type="Proteomes" id="UP000001726">
    <property type="component" value="Chromosome"/>
</dbReference>
<dbReference type="GO" id="GO:0005737">
    <property type="term" value="C:cytoplasm"/>
    <property type="evidence" value="ECO:0007669"/>
    <property type="project" value="UniProtKB-ARBA"/>
</dbReference>
<dbReference type="GO" id="GO:1990904">
    <property type="term" value="C:ribonucleoprotein complex"/>
    <property type="evidence" value="ECO:0007669"/>
    <property type="project" value="UniProtKB-KW"/>
</dbReference>
<dbReference type="GO" id="GO:0005840">
    <property type="term" value="C:ribosome"/>
    <property type="evidence" value="ECO:0007669"/>
    <property type="project" value="UniProtKB-KW"/>
</dbReference>
<dbReference type="GO" id="GO:0019843">
    <property type="term" value="F:rRNA binding"/>
    <property type="evidence" value="ECO:0007669"/>
    <property type="project" value="UniProtKB-UniRule"/>
</dbReference>
<dbReference type="GO" id="GO:0003735">
    <property type="term" value="F:structural constituent of ribosome"/>
    <property type="evidence" value="ECO:0007669"/>
    <property type="project" value="InterPro"/>
</dbReference>
<dbReference type="GO" id="GO:0006412">
    <property type="term" value="P:translation"/>
    <property type="evidence" value="ECO:0007669"/>
    <property type="project" value="UniProtKB-UniRule"/>
</dbReference>
<dbReference type="HAMAP" id="MF_01363">
    <property type="entry name" value="Ribosomal_bL21"/>
    <property type="match status" value="1"/>
</dbReference>
<dbReference type="InterPro" id="IPR028909">
    <property type="entry name" value="bL21-like"/>
</dbReference>
<dbReference type="InterPro" id="IPR036164">
    <property type="entry name" value="bL21-like_sf"/>
</dbReference>
<dbReference type="InterPro" id="IPR001787">
    <property type="entry name" value="Ribosomal_bL21"/>
</dbReference>
<dbReference type="InterPro" id="IPR018258">
    <property type="entry name" value="Ribosomal_bL21_CS"/>
</dbReference>
<dbReference type="NCBIfam" id="TIGR00061">
    <property type="entry name" value="L21"/>
    <property type="match status" value="1"/>
</dbReference>
<dbReference type="PANTHER" id="PTHR21349">
    <property type="entry name" value="50S RIBOSOMAL PROTEIN L21"/>
    <property type="match status" value="1"/>
</dbReference>
<dbReference type="PANTHER" id="PTHR21349:SF0">
    <property type="entry name" value="LARGE RIBOSOMAL SUBUNIT PROTEIN BL21M"/>
    <property type="match status" value="1"/>
</dbReference>
<dbReference type="Pfam" id="PF00829">
    <property type="entry name" value="Ribosomal_L21p"/>
    <property type="match status" value="1"/>
</dbReference>
<dbReference type="SUPFAM" id="SSF141091">
    <property type="entry name" value="L21p-like"/>
    <property type="match status" value="1"/>
</dbReference>
<dbReference type="PROSITE" id="PS01169">
    <property type="entry name" value="RIBOSOMAL_L21"/>
    <property type="match status" value="1"/>
</dbReference>
<accession>B2VGS9</accession>
<comment type="function">
    <text evidence="1">This protein binds to 23S rRNA in the presence of protein L20.</text>
</comment>
<comment type="subunit">
    <text evidence="1">Part of the 50S ribosomal subunit. Contacts protein L20.</text>
</comment>
<comment type="similarity">
    <text evidence="1">Belongs to the bacterial ribosomal protein bL21 family.</text>
</comment>
<name>RL21_ERWT9</name>
<reference key="1">
    <citation type="journal article" date="2008" name="Environ. Microbiol.">
        <title>The genome of Erwinia tasmaniensis strain Et1/99, a non-pathogenic bacterium in the genus Erwinia.</title>
        <authorList>
            <person name="Kube M."/>
            <person name="Migdoll A.M."/>
            <person name="Mueller I."/>
            <person name="Kuhl H."/>
            <person name="Beck A."/>
            <person name="Reinhardt R."/>
            <person name="Geider K."/>
        </authorList>
    </citation>
    <scope>NUCLEOTIDE SEQUENCE [LARGE SCALE GENOMIC DNA]</scope>
    <source>
        <strain>DSM 17950 / CFBP 7177 / CIP 109463 / NCPPB 4357 / Et1/99</strain>
    </source>
</reference>
<protein>
    <recommendedName>
        <fullName evidence="1">Large ribosomal subunit protein bL21</fullName>
    </recommendedName>
    <alternativeName>
        <fullName evidence="2">50S ribosomal protein L21</fullName>
    </alternativeName>
</protein>
<evidence type="ECO:0000255" key="1">
    <source>
        <dbReference type="HAMAP-Rule" id="MF_01363"/>
    </source>
</evidence>
<evidence type="ECO:0000305" key="2"/>
<proteinExistence type="inferred from homology"/>
<sequence length="103" mass="11531">MYAVFQSGGKQHRVSEGQTVRLEKLDIATGETIEFDQVLMIANGEDVKIGAPLVSGGVIKAEIVAHGRGDKIKIVKFRRRKHYRKQQGHRQWFTDVKITGISA</sequence>
<feature type="chain" id="PRO_1000143797" description="Large ribosomal subunit protein bL21">
    <location>
        <begin position="1"/>
        <end position="103"/>
    </location>
</feature>
<organism>
    <name type="scientific">Erwinia tasmaniensis (strain DSM 17950 / CFBP 7177 / CIP 109463 / NCPPB 4357 / Et1/99)</name>
    <dbReference type="NCBI Taxonomy" id="465817"/>
    <lineage>
        <taxon>Bacteria</taxon>
        <taxon>Pseudomonadati</taxon>
        <taxon>Pseudomonadota</taxon>
        <taxon>Gammaproteobacteria</taxon>
        <taxon>Enterobacterales</taxon>
        <taxon>Erwiniaceae</taxon>
        <taxon>Erwinia</taxon>
    </lineage>
</organism>
<gene>
    <name evidence="1" type="primary">rplU</name>
    <name type="ordered locus">ETA_03310</name>
</gene>